<keyword id="KW-0963">Cytoplasm</keyword>
<keyword id="KW-0489">Methyltransferase</keyword>
<keyword id="KW-0949">S-adenosyl-L-methionine</keyword>
<keyword id="KW-0808">Transferase</keyword>
<keyword id="KW-0819">tRNA processing</keyword>
<dbReference type="EC" id="2.1.1.223" evidence="1"/>
<dbReference type="EMBL" id="BA000037">
    <property type="protein sequence ID" value="BAC93425.1"/>
    <property type="status" value="ALT_INIT"/>
    <property type="molecule type" value="Genomic_DNA"/>
</dbReference>
<dbReference type="RefSeq" id="WP_043877070.1">
    <property type="nucleotide sequence ID" value="NC_005139.1"/>
</dbReference>
<dbReference type="SMR" id="Q7MNQ4"/>
<dbReference type="STRING" id="672.VV93_v1c06010"/>
<dbReference type="KEGG" id="vvy:VV0662"/>
<dbReference type="eggNOG" id="COG4123">
    <property type="taxonomic scope" value="Bacteria"/>
</dbReference>
<dbReference type="HOGENOM" id="CLU_061983_0_0_6"/>
<dbReference type="Proteomes" id="UP000002675">
    <property type="component" value="Chromosome I"/>
</dbReference>
<dbReference type="GO" id="GO:0005737">
    <property type="term" value="C:cytoplasm"/>
    <property type="evidence" value="ECO:0007669"/>
    <property type="project" value="UniProtKB-SubCell"/>
</dbReference>
<dbReference type="GO" id="GO:0003676">
    <property type="term" value="F:nucleic acid binding"/>
    <property type="evidence" value="ECO:0007669"/>
    <property type="project" value="InterPro"/>
</dbReference>
<dbReference type="GO" id="GO:0016430">
    <property type="term" value="F:tRNA (adenine-N6)-methyltransferase activity"/>
    <property type="evidence" value="ECO:0007669"/>
    <property type="project" value="UniProtKB-UniRule"/>
</dbReference>
<dbReference type="GO" id="GO:0032259">
    <property type="term" value="P:methylation"/>
    <property type="evidence" value="ECO:0007669"/>
    <property type="project" value="UniProtKB-KW"/>
</dbReference>
<dbReference type="GO" id="GO:0008033">
    <property type="term" value="P:tRNA processing"/>
    <property type="evidence" value="ECO:0007669"/>
    <property type="project" value="UniProtKB-UniRule"/>
</dbReference>
<dbReference type="CDD" id="cd02440">
    <property type="entry name" value="AdoMet_MTases"/>
    <property type="match status" value="1"/>
</dbReference>
<dbReference type="Gene3D" id="3.40.50.150">
    <property type="entry name" value="Vaccinia Virus protein VP39"/>
    <property type="match status" value="1"/>
</dbReference>
<dbReference type="HAMAP" id="MF_01872">
    <property type="entry name" value="tRNA_methyltr_YfiC"/>
    <property type="match status" value="1"/>
</dbReference>
<dbReference type="InterPro" id="IPR002052">
    <property type="entry name" value="DNA_methylase_N6_adenine_CS"/>
</dbReference>
<dbReference type="InterPro" id="IPR029063">
    <property type="entry name" value="SAM-dependent_MTases_sf"/>
</dbReference>
<dbReference type="InterPro" id="IPR007848">
    <property type="entry name" value="Small_mtfrase_dom"/>
</dbReference>
<dbReference type="InterPro" id="IPR050210">
    <property type="entry name" value="tRNA_Adenine-N(6)_MTase"/>
</dbReference>
<dbReference type="InterPro" id="IPR022882">
    <property type="entry name" value="tRNA_adenine-N6_MeTrfase"/>
</dbReference>
<dbReference type="PANTHER" id="PTHR47739">
    <property type="entry name" value="TRNA1(VAL) (ADENINE(37)-N6)-METHYLTRANSFERASE"/>
    <property type="match status" value="1"/>
</dbReference>
<dbReference type="PANTHER" id="PTHR47739:SF1">
    <property type="entry name" value="TRNA1(VAL) (ADENINE(37)-N6)-METHYLTRANSFERASE"/>
    <property type="match status" value="1"/>
</dbReference>
<dbReference type="Pfam" id="PF05175">
    <property type="entry name" value="MTS"/>
    <property type="match status" value="1"/>
</dbReference>
<dbReference type="PRINTS" id="PR00507">
    <property type="entry name" value="N12N6MTFRASE"/>
</dbReference>
<dbReference type="SUPFAM" id="SSF53335">
    <property type="entry name" value="S-adenosyl-L-methionine-dependent methyltransferases"/>
    <property type="match status" value="1"/>
</dbReference>
<dbReference type="PROSITE" id="PS00092">
    <property type="entry name" value="N6_MTASE"/>
    <property type="match status" value="1"/>
</dbReference>
<gene>
    <name type="ordered locus">VV0662</name>
</gene>
<reference key="1">
    <citation type="journal article" date="2003" name="Genome Res.">
        <title>Comparative genome analysis of Vibrio vulnificus, a marine pathogen.</title>
        <authorList>
            <person name="Chen C.-Y."/>
            <person name="Wu K.-M."/>
            <person name="Chang Y.-C."/>
            <person name="Chang C.-H."/>
            <person name="Tsai H.-C."/>
            <person name="Liao T.-L."/>
            <person name="Liu Y.-M."/>
            <person name="Chen H.-J."/>
            <person name="Shen A.B.-T."/>
            <person name="Li J.-C."/>
            <person name="Su T.-L."/>
            <person name="Shao C.-P."/>
            <person name="Lee C.-T."/>
            <person name="Hor L.-I."/>
            <person name="Tsai S.-F."/>
        </authorList>
    </citation>
    <scope>NUCLEOTIDE SEQUENCE [LARGE SCALE GENOMIC DNA]</scope>
    <source>
        <strain>YJ016</strain>
    </source>
</reference>
<organism>
    <name type="scientific">Vibrio vulnificus (strain YJ016)</name>
    <dbReference type="NCBI Taxonomy" id="196600"/>
    <lineage>
        <taxon>Bacteria</taxon>
        <taxon>Pseudomonadati</taxon>
        <taxon>Pseudomonadota</taxon>
        <taxon>Gammaproteobacteria</taxon>
        <taxon>Vibrionales</taxon>
        <taxon>Vibrionaceae</taxon>
        <taxon>Vibrio</taxon>
    </lineage>
</organism>
<proteinExistence type="inferred from homology"/>
<sequence length="239" mass="26579">MKSGTLKTKGFKFKQFSIASSNSGMPVSTDGVLLGAWADFHHSQNLLDIGTGTGLLSLMCAQRYAHLSITAVDIDAHAMEAAQENFSHSPWHSRLHLQHGDVLKLNFTHRFDGIICNPPYFNSGEQAQATQRATARHTDTLAHDALLLRCRELLTPNGKANFVLPLTEGEQFLQLAQQQGWHLHRLCRVKPSPNKPVHRLLFELGLSTATTSEEHLTINDGSTYSAAFVKLCQDFYLKM</sequence>
<comment type="function">
    <text evidence="1">Specifically methylates the adenine in position 37 of tRNA(1)(Val) (anticodon cmo5UAC).</text>
</comment>
<comment type="catalytic activity">
    <reaction evidence="1">
        <text>adenosine(37) in tRNA1(Val) + S-adenosyl-L-methionine = N(6)-methyladenosine(37) in tRNA1(Val) + S-adenosyl-L-homocysteine + H(+)</text>
        <dbReference type="Rhea" id="RHEA:43160"/>
        <dbReference type="Rhea" id="RHEA-COMP:10369"/>
        <dbReference type="Rhea" id="RHEA-COMP:10370"/>
        <dbReference type="ChEBI" id="CHEBI:15378"/>
        <dbReference type="ChEBI" id="CHEBI:57856"/>
        <dbReference type="ChEBI" id="CHEBI:59789"/>
        <dbReference type="ChEBI" id="CHEBI:74411"/>
        <dbReference type="ChEBI" id="CHEBI:74449"/>
        <dbReference type="EC" id="2.1.1.223"/>
    </reaction>
</comment>
<comment type="subcellular location">
    <subcellularLocation>
        <location evidence="1">Cytoplasm</location>
    </subcellularLocation>
</comment>
<comment type="similarity">
    <text evidence="1">Belongs to the methyltransferase superfamily. tRNA (adenine-N(6)-)-methyltransferase family.</text>
</comment>
<comment type="sequence caution" evidence="2">
    <conflict type="erroneous initiation">
        <sequence resource="EMBL-CDS" id="BAC93425"/>
    </conflict>
</comment>
<protein>
    <recommendedName>
        <fullName evidence="1">tRNA1(Val) (adenine(37)-N6)-methyltransferase</fullName>
        <ecNumber evidence="1">2.1.1.223</ecNumber>
    </recommendedName>
    <alternativeName>
        <fullName evidence="1">tRNA m6A37 methyltransferase</fullName>
    </alternativeName>
</protein>
<accession>Q7MNQ4</accession>
<name>TRMN6_VIBVY</name>
<evidence type="ECO:0000255" key="1">
    <source>
        <dbReference type="HAMAP-Rule" id="MF_01872"/>
    </source>
</evidence>
<evidence type="ECO:0000305" key="2"/>
<feature type="chain" id="PRO_0000387449" description="tRNA1(Val) (adenine(37)-N6)-methyltransferase">
    <location>
        <begin position="1"/>
        <end position="239"/>
    </location>
</feature>